<reference key="1">
    <citation type="journal article" date="2004" name="Science">
        <title>The 1.2-megabase genome sequence of Mimivirus.</title>
        <authorList>
            <person name="Raoult D."/>
            <person name="Audic S."/>
            <person name="Robert C."/>
            <person name="Abergel C."/>
            <person name="Renesto P."/>
            <person name="Ogata H."/>
            <person name="La Scola B."/>
            <person name="Susan M."/>
            <person name="Claverie J.-M."/>
        </authorList>
    </citation>
    <scope>NUCLEOTIDE SEQUENCE [LARGE SCALE GENOMIC DNA]</scope>
    <source>
        <strain>Rowbotham-Bradford</strain>
    </source>
</reference>
<gene>
    <name type="ordered locus">MIMI_R203</name>
</gene>
<organism>
    <name type="scientific">Acanthamoeba polyphaga mimivirus</name>
    <name type="common">APMV</name>
    <dbReference type="NCBI Taxonomy" id="212035"/>
    <lineage>
        <taxon>Viruses</taxon>
        <taxon>Varidnaviria</taxon>
        <taxon>Bamfordvirae</taxon>
        <taxon>Nucleocytoviricota</taxon>
        <taxon>Megaviricetes</taxon>
        <taxon>Imitervirales</taxon>
        <taxon>Mimiviridae</taxon>
        <taxon>Megamimivirinae</taxon>
        <taxon>Mimivirus</taxon>
        <taxon>Mimivirus bradfordmassiliense</taxon>
    </lineage>
</organism>
<organismHost>
    <name type="scientific">Acanthamoeba polyphaga</name>
    <name type="common">Amoeba</name>
    <dbReference type="NCBI Taxonomy" id="5757"/>
</organismHost>
<protein>
    <recommendedName>
        <fullName>Uncharacterized protein R203</fullName>
    </recommendedName>
</protein>
<keyword id="KW-1185">Reference proteome</keyword>
<feature type="chain" id="PRO_0000244777" description="Uncharacterized protein R203">
    <location>
        <begin position="1"/>
        <end position="337"/>
    </location>
</feature>
<feature type="region of interest" description="Disordered" evidence="1">
    <location>
        <begin position="291"/>
        <end position="314"/>
    </location>
</feature>
<feature type="compositionally biased region" description="Low complexity" evidence="1">
    <location>
        <begin position="299"/>
        <end position="308"/>
    </location>
</feature>
<proteinExistence type="predicted"/>
<dbReference type="EMBL" id="AY653733">
    <property type="protein sequence ID" value="AAV50476.1"/>
    <property type="molecule type" value="Genomic_DNA"/>
</dbReference>
<dbReference type="KEGG" id="vg:9924810"/>
<dbReference type="OrthoDB" id="14359at10239"/>
<dbReference type="Proteomes" id="UP000001134">
    <property type="component" value="Genome"/>
</dbReference>
<name>YR203_MIMIV</name>
<evidence type="ECO:0000256" key="1">
    <source>
        <dbReference type="SAM" id="MobiDB-lite"/>
    </source>
</evidence>
<accession>Q5UQ26</accession>
<sequence>MDSHIHNDTDDWFNDLDQKSIQVISNKLIPEESNSSDEEISLENINSRSNFIDDNDKIEHIFIEDILKKDVVNLSSNELLQYQCSVAYFIQVLFEGLNDSNELIANKSNFNIKTTSDKMNSMVEYLEWISGVSEILAKRIGQQIYQFIPDRNNTITRSSYNFCPASTQCKKFYSKNENPTCKSHHFVHSLLKYDVDSVIYYLKHNNKNGSFNTDELNNLHLSIKTICFVTRHMAREISYIENITKNNSEQFHRNNPADLTKKKSTNVSGKKSWDSVSTIRTHKATKTFPQNKTRQCSNTKTTTKSTMTPINNGFKESPNQILKIKNGVNRYSILSEY</sequence>